<gene>
    <name evidence="1" type="primary">ruvC</name>
    <name type="ordered locus">RALTA_A0456</name>
</gene>
<name>RUVC_CUPTR</name>
<keyword id="KW-0963">Cytoplasm</keyword>
<keyword id="KW-0227">DNA damage</keyword>
<keyword id="KW-0233">DNA recombination</keyword>
<keyword id="KW-0234">DNA repair</keyword>
<keyword id="KW-0238">DNA-binding</keyword>
<keyword id="KW-0255">Endonuclease</keyword>
<keyword id="KW-0378">Hydrolase</keyword>
<keyword id="KW-0460">Magnesium</keyword>
<keyword id="KW-0479">Metal-binding</keyword>
<keyword id="KW-0540">Nuclease</keyword>
<sequence length="181" mass="18953">MRILGIDPGLRTTGFGVIEKQGNKLAYIASGTIKSDGNANLPERLKTLYDGISEVSRTYAPDCAAIEKVFVNVNPQSTLLLGQARGAAICGLVGYGLPVFEYTALQLKVAVVGYGRANKAQVQEMVTRLLMLPGQPGSDAADALGVAICHANGGDTLGTLAGLAPDLVRKGMRVRRGRLVG</sequence>
<dbReference type="EC" id="3.1.21.10" evidence="1"/>
<dbReference type="EMBL" id="CU633749">
    <property type="protein sequence ID" value="CAP63124.1"/>
    <property type="molecule type" value="Genomic_DNA"/>
</dbReference>
<dbReference type="RefSeq" id="WP_012351785.1">
    <property type="nucleotide sequence ID" value="NC_010528.1"/>
</dbReference>
<dbReference type="SMR" id="B2AH75"/>
<dbReference type="GeneID" id="29762202"/>
<dbReference type="KEGG" id="cti:RALTA_A0456"/>
<dbReference type="eggNOG" id="COG0817">
    <property type="taxonomic scope" value="Bacteria"/>
</dbReference>
<dbReference type="HOGENOM" id="CLU_091257_2_0_4"/>
<dbReference type="BioCyc" id="CTAI977880:RALTA_RS02230-MONOMER"/>
<dbReference type="Proteomes" id="UP000001692">
    <property type="component" value="Chromosome 1"/>
</dbReference>
<dbReference type="GO" id="GO:0005737">
    <property type="term" value="C:cytoplasm"/>
    <property type="evidence" value="ECO:0007669"/>
    <property type="project" value="UniProtKB-SubCell"/>
</dbReference>
<dbReference type="GO" id="GO:0048476">
    <property type="term" value="C:Holliday junction resolvase complex"/>
    <property type="evidence" value="ECO:0007669"/>
    <property type="project" value="UniProtKB-UniRule"/>
</dbReference>
<dbReference type="GO" id="GO:0008821">
    <property type="term" value="F:crossover junction DNA endonuclease activity"/>
    <property type="evidence" value="ECO:0007669"/>
    <property type="project" value="UniProtKB-UniRule"/>
</dbReference>
<dbReference type="GO" id="GO:0003677">
    <property type="term" value="F:DNA binding"/>
    <property type="evidence" value="ECO:0007669"/>
    <property type="project" value="UniProtKB-KW"/>
</dbReference>
<dbReference type="GO" id="GO:0000287">
    <property type="term" value="F:magnesium ion binding"/>
    <property type="evidence" value="ECO:0007669"/>
    <property type="project" value="UniProtKB-UniRule"/>
</dbReference>
<dbReference type="GO" id="GO:0006310">
    <property type="term" value="P:DNA recombination"/>
    <property type="evidence" value="ECO:0007669"/>
    <property type="project" value="UniProtKB-UniRule"/>
</dbReference>
<dbReference type="GO" id="GO:0006281">
    <property type="term" value="P:DNA repair"/>
    <property type="evidence" value="ECO:0007669"/>
    <property type="project" value="UniProtKB-UniRule"/>
</dbReference>
<dbReference type="CDD" id="cd16962">
    <property type="entry name" value="RuvC"/>
    <property type="match status" value="1"/>
</dbReference>
<dbReference type="FunFam" id="3.30.420.10:FF:000002">
    <property type="entry name" value="Crossover junction endodeoxyribonuclease RuvC"/>
    <property type="match status" value="1"/>
</dbReference>
<dbReference type="Gene3D" id="3.30.420.10">
    <property type="entry name" value="Ribonuclease H-like superfamily/Ribonuclease H"/>
    <property type="match status" value="1"/>
</dbReference>
<dbReference type="HAMAP" id="MF_00034">
    <property type="entry name" value="RuvC"/>
    <property type="match status" value="1"/>
</dbReference>
<dbReference type="InterPro" id="IPR012337">
    <property type="entry name" value="RNaseH-like_sf"/>
</dbReference>
<dbReference type="InterPro" id="IPR036397">
    <property type="entry name" value="RNaseH_sf"/>
</dbReference>
<dbReference type="InterPro" id="IPR020563">
    <property type="entry name" value="X-over_junc_endoDNase_Mg_BS"/>
</dbReference>
<dbReference type="InterPro" id="IPR002176">
    <property type="entry name" value="X-over_junc_endoDNase_RuvC"/>
</dbReference>
<dbReference type="NCBIfam" id="TIGR00228">
    <property type="entry name" value="ruvC"/>
    <property type="match status" value="1"/>
</dbReference>
<dbReference type="PANTHER" id="PTHR30194">
    <property type="entry name" value="CROSSOVER JUNCTION ENDODEOXYRIBONUCLEASE RUVC"/>
    <property type="match status" value="1"/>
</dbReference>
<dbReference type="PANTHER" id="PTHR30194:SF3">
    <property type="entry name" value="CROSSOVER JUNCTION ENDODEOXYRIBONUCLEASE RUVC"/>
    <property type="match status" value="1"/>
</dbReference>
<dbReference type="Pfam" id="PF02075">
    <property type="entry name" value="RuvC"/>
    <property type="match status" value="1"/>
</dbReference>
<dbReference type="PRINTS" id="PR00696">
    <property type="entry name" value="RSOLVASERUVC"/>
</dbReference>
<dbReference type="SUPFAM" id="SSF53098">
    <property type="entry name" value="Ribonuclease H-like"/>
    <property type="match status" value="1"/>
</dbReference>
<dbReference type="PROSITE" id="PS01321">
    <property type="entry name" value="RUVC"/>
    <property type="match status" value="1"/>
</dbReference>
<feature type="chain" id="PRO_1000090519" description="Crossover junction endodeoxyribonuclease RuvC">
    <location>
        <begin position="1"/>
        <end position="181"/>
    </location>
</feature>
<feature type="active site" evidence="1">
    <location>
        <position position="7"/>
    </location>
</feature>
<feature type="active site" evidence="1">
    <location>
        <position position="67"/>
    </location>
</feature>
<feature type="active site" evidence="1">
    <location>
        <position position="139"/>
    </location>
</feature>
<feature type="binding site" evidence="1">
    <location>
        <position position="7"/>
    </location>
    <ligand>
        <name>Mg(2+)</name>
        <dbReference type="ChEBI" id="CHEBI:18420"/>
        <label>1</label>
    </ligand>
</feature>
<feature type="binding site" evidence="1">
    <location>
        <position position="67"/>
    </location>
    <ligand>
        <name>Mg(2+)</name>
        <dbReference type="ChEBI" id="CHEBI:18420"/>
        <label>2</label>
    </ligand>
</feature>
<feature type="binding site" evidence="1">
    <location>
        <position position="139"/>
    </location>
    <ligand>
        <name>Mg(2+)</name>
        <dbReference type="ChEBI" id="CHEBI:18420"/>
        <label>1</label>
    </ligand>
</feature>
<protein>
    <recommendedName>
        <fullName evidence="1">Crossover junction endodeoxyribonuclease RuvC</fullName>
        <ecNumber evidence="1">3.1.21.10</ecNumber>
    </recommendedName>
    <alternativeName>
        <fullName evidence="1">Holliday junction nuclease RuvC</fullName>
    </alternativeName>
    <alternativeName>
        <fullName evidence="1">Holliday junction resolvase RuvC</fullName>
    </alternativeName>
</protein>
<evidence type="ECO:0000255" key="1">
    <source>
        <dbReference type="HAMAP-Rule" id="MF_00034"/>
    </source>
</evidence>
<reference key="1">
    <citation type="journal article" date="2008" name="Genome Res.">
        <title>Genome sequence of the beta-rhizobium Cupriavidus taiwanensis and comparative genomics of rhizobia.</title>
        <authorList>
            <person name="Amadou C."/>
            <person name="Pascal G."/>
            <person name="Mangenot S."/>
            <person name="Glew M."/>
            <person name="Bontemps C."/>
            <person name="Capela D."/>
            <person name="Carrere S."/>
            <person name="Cruveiller S."/>
            <person name="Dossat C."/>
            <person name="Lajus A."/>
            <person name="Marchetti M."/>
            <person name="Poinsot V."/>
            <person name="Rouy Z."/>
            <person name="Servin B."/>
            <person name="Saad M."/>
            <person name="Schenowitz C."/>
            <person name="Barbe V."/>
            <person name="Batut J."/>
            <person name="Medigue C."/>
            <person name="Masson-Boivin C."/>
        </authorList>
    </citation>
    <scope>NUCLEOTIDE SEQUENCE [LARGE SCALE GENOMIC DNA]</scope>
    <source>
        <strain>DSM 17343 / BCRC 17206 / CCUG 44338 / CIP 107171 / LMG 19424 / R1</strain>
    </source>
</reference>
<comment type="function">
    <text evidence="1">The RuvA-RuvB-RuvC complex processes Holliday junction (HJ) DNA during genetic recombination and DNA repair. Endonuclease that resolves HJ intermediates. Cleaves cruciform DNA by making single-stranded nicks across the HJ at symmetrical positions within the homologous arms, yielding a 5'-phosphate and a 3'-hydroxyl group; requires a central core of homology in the junction. The consensus cleavage sequence is 5'-(A/T)TT(C/G)-3'. Cleavage occurs on the 3'-side of the TT dinucleotide at the point of strand exchange. HJ branch migration catalyzed by RuvA-RuvB allows RuvC to scan DNA until it finds its consensus sequence, where it cleaves and resolves the cruciform DNA.</text>
</comment>
<comment type="catalytic activity">
    <reaction evidence="1">
        <text>Endonucleolytic cleavage at a junction such as a reciprocal single-stranded crossover between two homologous DNA duplexes (Holliday junction).</text>
        <dbReference type="EC" id="3.1.21.10"/>
    </reaction>
</comment>
<comment type="cofactor">
    <cofactor evidence="1">
        <name>Mg(2+)</name>
        <dbReference type="ChEBI" id="CHEBI:18420"/>
    </cofactor>
    <text evidence="1">Binds 2 Mg(2+) ion per subunit.</text>
</comment>
<comment type="subunit">
    <text evidence="1">Homodimer which binds Holliday junction (HJ) DNA. The HJ becomes 2-fold symmetrical on binding to RuvC with unstacked arms; it has a different conformation from HJ DNA in complex with RuvA. In the full resolvosome a probable DNA-RuvA(4)-RuvB(12)-RuvC(2) complex forms which resolves the HJ.</text>
</comment>
<comment type="subcellular location">
    <subcellularLocation>
        <location evidence="1">Cytoplasm</location>
    </subcellularLocation>
</comment>
<comment type="similarity">
    <text evidence="1">Belongs to the RuvC family.</text>
</comment>
<accession>B2AH75</accession>
<organism>
    <name type="scientific">Cupriavidus taiwanensis (strain DSM 17343 / BCRC 17206 / CCUG 44338 / CIP 107171 / LMG 19424 / R1)</name>
    <name type="common">Ralstonia taiwanensis (strain LMG 19424)</name>
    <dbReference type="NCBI Taxonomy" id="977880"/>
    <lineage>
        <taxon>Bacteria</taxon>
        <taxon>Pseudomonadati</taxon>
        <taxon>Pseudomonadota</taxon>
        <taxon>Betaproteobacteria</taxon>
        <taxon>Burkholderiales</taxon>
        <taxon>Burkholderiaceae</taxon>
        <taxon>Cupriavidus</taxon>
    </lineage>
</organism>
<proteinExistence type="inferred from homology"/>